<comment type="function">
    <text evidence="1">Complexes with metalloproteinases (such as collagenases) and irreversibly inactivates them by binding to their catalytic zinc cofactor. May form part of a tissue-specific acute response to remodeling stimuli (By similarity).</text>
</comment>
<comment type="subunit">
    <text evidence="1">Interacts with EFEMP1.</text>
</comment>
<comment type="subcellular location">
    <subcellularLocation>
        <location>Secreted</location>
        <location>Extracellular space</location>
        <location>Extracellular matrix</location>
    </subcellularLocation>
</comment>
<comment type="similarity">
    <text evidence="4">Belongs to the protease inhibitor I35 (TIMP) family.</text>
</comment>
<name>TIMP3_RABIT</name>
<protein>
    <recommendedName>
        <fullName>Metalloproteinase inhibitor 3</fullName>
    </recommendedName>
    <alternativeName>
        <fullName>Tissue inhibitor of metalloproteinases 3</fullName>
        <shortName>TIMP-3</shortName>
    </alternativeName>
</protein>
<evidence type="ECO:0000250" key="1"/>
<evidence type="ECO:0000250" key="2">
    <source>
        <dbReference type="UniProtKB" id="P16035"/>
    </source>
</evidence>
<evidence type="ECO:0000255" key="3">
    <source>
        <dbReference type="PROSITE-ProRule" id="PRU00295"/>
    </source>
</evidence>
<evidence type="ECO:0000305" key="4"/>
<gene>
    <name type="primary">TIMP3</name>
</gene>
<accession>O97590</accession>
<keyword id="KW-1015">Disulfide bond</keyword>
<keyword id="KW-0272">Extracellular matrix</keyword>
<keyword id="KW-0481">Metalloenzyme inhibitor</keyword>
<keyword id="KW-0483">Metalloprotease inhibitor</keyword>
<keyword id="KW-0646">Protease inhibitor</keyword>
<keyword id="KW-1185">Reference proteome</keyword>
<keyword id="KW-0964">Secreted</keyword>
<reference key="1">
    <citation type="journal article" date="1998" name="Biochem. Biophys. Res. Commun.">
        <title>Temporal alterations in mRNA levels for proteinases and inhibitors and their potential regulators in the healing medial collateral ligament.</title>
        <authorList>
            <person name="Reno C."/>
            <person name="Boykiw R."/>
            <person name="Martinez M.L."/>
            <person name="Hart D.A."/>
        </authorList>
    </citation>
    <scope>NUCLEOTIDE SEQUENCE [MRNA]</scope>
    <source>
        <strain>New Zealand white</strain>
    </source>
</reference>
<proteinExistence type="evidence at transcript level"/>
<sequence length="151" mass="17595">CNSDIVIRAKVVGKKLVKEGPFGTMVYTVKQMKMYRGFTKMPHVQYIHTEASESLCGLKLEVNKYQYLLTGRVYDGKVYTGLCNFVERWDQLTLSQRKGLNYRYHLGCNCKIKSCYYLPCFVTSKNECLWTDMLSNFGYPGYQSKHYACIR</sequence>
<feature type="chain" id="PRO_0000220985" description="Metalloproteinase inhibitor 3">
    <location>
        <begin position="1" status="less than"/>
        <end position="151" status="greater than"/>
    </location>
</feature>
<feature type="domain" description="NTR" evidence="3">
    <location>
        <begin position="1" status="less than"/>
        <end position="108"/>
    </location>
</feature>
<feature type="region of interest" description="Involved in metalloproteinase-binding" evidence="2">
    <location>
        <begin position="53"/>
        <end position="54"/>
    </location>
</feature>
<feature type="region of interest" description="Mediates interaction with EFEMP1" evidence="1">
    <location>
        <begin position="71"/>
        <end position="151"/>
    </location>
</feature>
<feature type="site" description="Involved in metalloproteinase-binding" evidence="2">
    <location>
        <position position="2"/>
    </location>
</feature>
<feature type="disulfide bond" evidence="3">
    <location>
        <begin position="1"/>
        <end position="108"/>
    </location>
</feature>
<feature type="disulfide bond" evidence="3">
    <location>
        <begin position="115"/>
        <end position="120"/>
    </location>
</feature>
<feature type="disulfide bond" evidence="3">
    <location>
        <begin position="128"/>
        <end position="149"/>
    </location>
</feature>
<feature type="non-terminal residue">
    <location>
        <position position="1"/>
    </location>
</feature>
<feature type="non-terminal residue">
    <location>
        <position position="151"/>
    </location>
</feature>
<dbReference type="EMBL" id="AF069714">
    <property type="protein sequence ID" value="AAC95006.1"/>
    <property type="molecule type" value="mRNA"/>
</dbReference>
<dbReference type="SMR" id="O97590"/>
<dbReference type="STRING" id="9986.ENSOCUP00000007183"/>
<dbReference type="MEROPS" id="I35.003"/>
<dbReference type="PaxDb" id="9986-ENSOCUP00000007183"/>
<dbReference type="eggNOG" id="KOG4745">
    <property type="taxonomic scope" value="Eukaryota"/>
</dbReference>
<dbReference type="InParanoid" id="O97590"/>
<dbReference type="Proteomes" id="UP000001811">
    <property type="component" value="Unplaced"/>
</dbReference>
<dbReference type="GO" id="GO:0031012">
    <property type="term" value="C:extracellular matrix"/>
    <property type="evidence" value="ECO:0007669"/>
    <property type="project" value="TreeGrafter"/>
</dbReference>
<dbReference type="GO" id="GO:0005615">
    <property type="term" value="C:extracellular space"/>
    <property type="evidence" value="ECO:0007669"/>
    <property type="project" value="TreeGrafter"/>
</dbReference>
<dbReference type="GO" id="GO:0008191">
    <property type="term" value="F:metalloendopeptidase inhibitor activity"/>
    <property type="evidence" value="ECO:0007669"/>
    <property type="project" value="InterPro"/>
</dbReference>
<dbReference type="GO" id="GO:0002020">
    <property type="term" value="F:protease binding"/>
    <property type="evidence" value="ECO:0007669"/>
    <property type="project" value="TreeGrafter"/>
</dbReference>
<dbReference type="GO" id="GO:0051045">
    <property type="term" value="P:negative regulation of membrane protein ectodomain proteolysis"/>
    <property type="evidence" value="ECO:0007669"/>
    <property type="project" value="TreeGrafter"/>
</dbReference>
<dbReference type="GO" id="GO:0034097">
    <property type="term" value="P:response to cytokine"/>
    <property type="evidence" value="ECO:0007669"/>
    <property type="project" value="TreeGrafter"/>
</dbReference>
<dbReference type="GO" id="GO:0009725">
    <property type="term" value="P:response to hormone"/>
    <property type="evidence" value="ECO:0007669"/>
    <property type="project" value="TreeGrafter"/>
</dbReference>
<dbReference type="CDD" id="cd03585">
    <property type="entry name" value="NTR_TIMP"/>
    <property type="match status" value="1"/>
</dbReference>
<dbReference type="FunFam" id="3.90.370.10:FF:000001">
    <property type="entry name" value="Metalloproteinase inhibitor 3"/>
    <property type="match status" value="1"/>
</dbReference>
<dbReference type="FunFam" id="2.40.50.120:FF:000005">
    <property type="entry name" value="Metalloproteinase inhibitor 3 precursor"/>
    <property type="match status" value="1"/>
</dbReference>
<dbReference type="Gene3D" id="2.40.50.120">
    <property type="match status" value="1"/>
</dbReference>
<dbReference type="Gene3D" id="3.90.370.10">
    <property type="entry name" value="Tissue inhibitor of metalloproteinase-1. Chain B, domain 1"/>
    <property type="match status" value="1"/>
</dbReference>
<dbReference type="InterPro" id="IPR001134">
    <property type="entry name" value="Netrin_domain"/>
</dbReference>
<dbReference type="InterPro" id="IPR001820">
    <property type="entry name" value="TIMP"/>
</dbReference>
<dbReference type="InterPro" id="IPR008993">
    <property type="entry name" value="TIMP-like_OB-fold"/>
</dbReference>
<dbReference type="InterPro" id="IPR027465">
    <property type="entry name" value="TIMP_C"/>
</dbReference>
<dbReference type="PANTHER" id="PTHR11844">
    <property type="entry name" value="METALLOPROTEASE INHIBITOR"/>
    <property type="match status" value="1"/>
</dbReference>
<dbReference type="PANTHER" id="PTHR11844:SF22">
    <property type="entry name" value="METALLOPROTEINASE INHIBITOR 3"/>
    <property type="match status" value="1"/>
</dbReference>
<dbReference type="Pfam" id="PF00965">
    <property type="entry name" value="TIMP"/>
    <property type="match status" value="1"/>
</dbReference>
<dbReference type="SMART" id="SM00206">
    <property type="entry name" value="NTR"/>
    <property type="match status" value="1"/>
</dbReference>
<dbReference type="SUPFAM" id="SSF50242">
    <property type="entry name" value="TIMP-like"/>
    <property type="match status" value="1"/>
</dbReference>
<dbReference type="PROSITE" id="PS50189">
    <property type="entry name" value="NTR"/>
    <property type="match status" value="1"/>
</dbReference>
<organism>
    <name type="scientific">Oryctolagus cuniculus</name>
    <name type="common">Rabbit</name>
    <dbReference type="NCBI Taxonomy" id="9986"/>
    <lineage>
        <taxon>Eukaryota</taxon>
        <taxon>Metazoa</taxon>
        <taxon>Chordata</taxon>
        <taxon>Craniata</taxon>
        <taxon>Vertebrata</taxon>
        <taxon>Euteleostomi</taxon>
        <taxon>Mammalia</taxon>
        <taxon>Eutheria</taxon>
        <taxon>Euarchontoglires</taxon>
        <taxon>Glires</taxon>
        <taxon>Lagomorpha</taxon>
        <taxon>Leporidae</taxon>
        <taxon>Oryctolagus</taxon>
    </lineage>
</organism>